<name>LIPA_SHOC1</name>
<reference key="1">
    <citation type="submission" date="2003-10" db="EMBL/GenBank/DDBJ databases">
        <title>The complete genome sequence of the alkaliphilic Bacillus clausii KSM-K16.</title>
        <authorList>
            <person name="Takaki Y."/>
            <person name="Kageyama Y."/>
            <person name="Shimamura S."/>
            <person name="Suzuki H."/>
            <person name="Nishi S."/>
            <person name="Hatada Y."/>
            <person name="Kawai S."/>
            <person name="Ito S."/>
            <person name="Horikoshi K."/>
        </authorList>
    </citation>
    <scope>NUCLEOTIDE SEQUENCE [LARGE SCALE GENOMIC DNA]</scope>
    <source>
        <strain>KSM-K16</strain>
    </source>
</reference>
<comment type="function">
    <text evidence="1">Catalyzes the radical-mediated insertion of two sulfur atoms into the C-6 and C-8 positions of the octanoyl moiety bound to the lipoyl domains of lipoate-dependent enzymes, thereby converting the octanoylated domains into lipoylated derivatives.</text>
</comment>
<comment type="catalytic activity">
    <reaction evidence="1">
        <text>[[Fe-S] cluster scaffold protein carrying a second [4Fe-4S](2+) cluster] + N(6)-octanoyl-L-lysyl-[protein] + 2 oxidized [2Fe-2S]-[ferredoxin] + 2 S-adenosyl-L-methionine + 4 H(+) = [[Fe-S] cluster scaffold protein] + N(6)-[(R)-dihydrolipoyl]-L-lysyl-[protein] + 4 Fe(3+) + 2 hydrogen sulfide + 2 5'-deoxyadenosine + 2 L-methionine + 2 reduced [2Fe-2S]-[ferredoxin]</text>
        <dbReference type="Rhea" id="RHEA:16585"/>
        <dbReference type="Rhea" id="RHEA-COMP:9928"/>
        <dbReference type="Rhea" id="RHEA-COMP:10000"/>
        <dbReference type="Rhea" id="RHEA-COMP:10001"/>
        <dbReference type="Rhea" id="RHEA-COMP:10475"/>
        <dbReference type="Rhea" id="RHEA-COMP:14568"/>
        <dbReference type="Rhea" id="RHEA-COMP:14569"/>
        <dbReference type="ChEBI" id="CHEBI:15378"/>
        <dbReference type="ChEBI" id="CHEBI:17319"/>
        <dbReference type="ChEBI" id="CHEBI:29034"/>
        <dbReference type="ChEBI" id="CHEBI:29919"/>
        <dbReference type="ChEBI" id="CHEBI:33722"/>
        <dbReference type="ChEBI" id="CHEBI:33737"/>
        <dbReference type="ChEBI" id="CHEBI:33738"/>
        <dbReference type="ChEBI" id="CHEBI:57844"/>
        <dbReference type="ChEBI" id="CHEBI:59789"/>
        <dbReference type="ChEBI" id="CHEBI:78809"/>
        <dbReference type="ChEBI" id="CHEBI:83100"/>
        <dbReference type="EC" id="2.8.1.8"/>
    </reaction>
</comment>
<comment type="cofactor">
    <cofactor evidence="1">
        <name>[4Fe-4S] cluster</name>
        <dbReference type="ChEBI" id="CHEBI:49883"/>
    </cofactor>
    <text evidence="1">Binds 2 [4Fe-4S] clusters per subunit. One cluster is coordinated with 3 cysteines and an exchangeable S-adenosyl-L-methionine.</text>
</comment>
<comment type="pathway">
    <text evidence="1">Protein modification; protein lipoylation via endogenous pathway; protein N(6)-(lipoyl)lysine from octanoyl-[acyl-carrier-protein].</text>
</comment>
<comment type="subcellular location">
    <subcellularLocation>
        <location evidence="1">Cytoplasm</location>
    </subcellularLocation>
</comment>
<comment type="similarity">
    <text evidence="1">Belongs to the radical SAM superfamily. Lipoyl synthase family.</text>
</comment>
<accession>Q5WDS6</accession>
<sequence length="309" mass="35375">MPEKDEKEQHMRKPDWLKIKLNTNESYTGLKKMMREKKLHTVCEEARCPNIHECWAVRKTATFMILGDICTRGCRFCAVKTGLPTELDLQEPERVAESVETMGLKHVVITAVARDDLKDGGAAVFAETVRAVRRKNPFCTIEVLPSDMLGNESSLQTLMDARPNIMNHNIETVRRLTPKVRARAKYDRTLEFLRRAKEMHPDIPTKSSLMVGLGETKEEILETMDDLRANNVDILTIGQYLQPTKKHLKVIKYYHPDEFAELKEIAMQKGFSHCEAGPLVRSSYHADEQVNQAQVNMEARKAQGEQQRV</sequence>
<proteinExistence type="inferred from homology"/>
<feature type="chain" id="PRO_0000325231" description="Lipoyl synthase">
    <location>
        <begin position="1"/>
        <end position="309"/>
    </location>
</feature>
<feature type="domain" description="Radical SAM core" evidence="2">
    <location>
        <begin position="56"/>
        <end position="272"/>
    </location>
</feature>
<feature type="binding site" evidence="1">
    <location>
        <position position="43"/>
    </location>
    <ligand>
        <name>[4Fe-4S] cluster</name>
        <dbReference type="ChEBI" id="CHEBI:49883"/>
        <label>1</label>
    </ligand>
</feature>
<feature type="binding site" evidence="1">
    <location>
        <position position="48"/>
    </location>
    <ligand>
        <name>[4Fe-4S] cluster</name>
        <dbReference type="ChEBI" id="CHEBI:49883"/>
        <label>1</label>
    </ligand>
</feature>
<feature type="binding site" evidence="1">
    <location>
        <position position="54"/>
    </location>
    <ligand>
        <name>[4Fe-4S] cluster</name>
        <dbReference type="ChEBI" id="CHEBI:49883"/>
        <label>1</label>
    </ligand>
</feature>
<feature type="binding site" evidence="1">
    <location>
        <position position="70"/>
    </location>
    <ligand>
        <name>[4Fe-4S] cluster</name>
        <dbReference type="ChEBI" id="CHEBI:49883"/>
        <label>2</label>
        <note>4Fe-4S-S-AdoMet</note>
    </ligand>
</feature>
<feature type="binding site" evidence="1">
    <location>
        <position position="74"/>
    </location>
    <ligand>
        <name>[4Fe-4S] cluster</name>
        <dbReference type="ChEBI" id="CHEBI:49883"/>
        <label>2</label>
        <note>4Fe-4S-S-AdoMet</note>
    </ligand>
</feature>
<feature type="binding site" evidence="1">
    <location>
        <position position="77"/>
    </location>
    <ligand>
        <name>[4Fe-4S] cluster</name>
        <dbReference type="ChEBI" id="CHEBI:49883"/>
        <label>2</label>
        <note>4Fe-4S-S-AdoMet</note>
    </ligand>
</feature>
<feature type="binding site" evidence="1">
    <location>
        <position position="283"/>
    </location>
    <ligand>
        <name>[4Fe-4S] cluster</name>
        <dbReference type="ChEBI" id="CHEBI:49883"/>
        <label>1</label>
    </ligand>
</feature>
<keyword id="KW-0004">4Fe-4S</keyword>
<keyword id="KW-0963">Cytoplasm</keyword>
<keyword id="KW-0408">Iron</keyword>
<keyword id="KW-0411">Iron-sulfur</keyword>
<keyword id="KW-0479">Metal-binding</keyword>
<keyword id="KW-1185">Reference proteome</keyword>
<keyword id="KW-0949">S-adenosyl-L-methionine</keyword>
<keyword id="KW-0808">Transferase</keyword>
<organism>
    <name type="scientific">Shouchella clausii (strain KSM-K16)</name>
    <name type="common">Alkalihalobacillus clausii</name>
    <dbReference type="NCBI Taxonomy" id="66692"/>
    <lineage>
        <taxon>Bacteria</taxon>
        <taxon>Bacillati</taxon>
        <taxon>Bacillota</taxon>
        <taxon>Bacilli</taxon>
        <taxon>Bacillales</taxon>
        <taxon>Bacillaceae</taxon>
        <taxon>Shouchella</taxon>
    </lineage>
</organism>
<gene>
    <name evidence="1" type="primary">lipA</name>
    <name type="ordered locus">ABC2950</name>
</gene>
<protein>
    <recommendedName>
        <fullName evidence="1">Lipoyl synthase</fullName>
        <ecNumber evidence="1">2.8.1.8</ecNumber>
    </recommendedName>
    <alternativeName>
        <fullName evidence="1">Lip-syn</fullName>
        <shortName evidence="1">LS</shortName>
    </alternativeName>
    <alternativeName>
        <fullName evidence="1">Lipoate synthase</fullName>
    </alternativeName>
    <alternativeName>
        <fullName evidence="1">Lipoic acid synthase</fullName>
    </alternativeName>
    <alternativeName>
        <fullName evidence="1">Sulfur insertion protein LipA</fullName>
    </alternativeName>
</protein>
<evidence type="ECO:0000255" key="1">
    <source>
        <dbReference type="HAMAP-Rule" id="MF_00206"/>
    </source>
</evidence>
<evidence type="ECO:0000255" key="2">
    <source>
        <dbReference type="PROSITE-ProRule" id="PRU01266"/>
    </source>
</evidence>
<dbReference type="EC" id="2.8.1.8" evidence="1"/>
<dbReference type="EMBL" id="AP006627">
    <property type="protein sequence ID" value="BAD65484.1"/>
    <property type="molecule type" value="Genomic_DNA"/>
</dbReference>
<dbReference type="RefSeq" id="WP_011247792.1">
    <property type="nucleotide sequence ID" value="NC_006582.1"/>
</dbReference>
<dbReference type="SMR" id="Q5WDS6"/>
<dbReference type="STRING" id="66692.ABC2950"/>
<dbReference type="KEGG" id="bcl:ABC2950"/>
<dbReference type="eggNOG" id="COG0320">
    <property type="taxonomic scope" value="Bacteria"/>
</dbReference>
<dbReference type="HOGENOM" id="CLU_033144_2_1_9"/>
<dbReference type="OrthoDB" id="9787898at2"/>
<dbReference type="Proteomes" id="UP000001168">
    <property type="component" value="Chromosome"/>
</dbReference>
<dbReference type="GO" id="GO:0005737">
    <property type="term" value="C:cytoplasm"/>
    <property type="evidence" value="ECO:0007669"/>
    <property type="project" value="UniProtKB-SubCell"/>
</dbReference>
<dbReference type="GO" id="GO:0051539">
    <property type="term" value="F:4 iron, 4 sulfur cluster binding"/>
    <property type="evidence" value="ECO:0007669"/>
    <property type="project" value="UniProtKB-UniRule"/>
</dbReference>
<dbReference type="GO" id="GO:0016992">
    <property type="term" value="F:lipoate synthase activity"/>
    <property type="evidence" value="ECO:0007669"/>
    <property type="project" value="UniProtKB-UniRule"/>
</dbReference>
<dbReference type="GO" id="GO:0046872">
    <property type="term" value="F:metal ion binding"/>
    <property type="evidence" value="ECO:0007669"/>
    <property type="project" value="UniProtKB-KW"/>
</dbReference>
<dbReference type="CDD" id="cd01335">
    <property type="entry name" value="Radical_SAM"/>
    <property type="match status" value="1"/>
</dbReference>
<dbReference type="FunFam" id="3.20.20.70:FF:000040">
    <property type="entry name" value="Lipoyl synthase"/>
    <property type="match status" value="1"/>
</dbReference>
<dbReference type="Gene3D" id="3.20.20.70">
    <property type="entry name" value="Aldolase class I"/>
    <property type="match status" value="1"/>
</dbReference>
<dbReference type="HAMAP" id="MF_00206">
    <property type="entry name" value="Lipoyl_synth"/>
    <property type="match status" value="1"/>
</dbReference>
<dbReference type="InterPro" id="IPR013785">
    <property type="entry name" value="Aldolase_TIM"/>
</dbReference>
<dbReference type="InterPro" id="IPR006638">
    <property type="entry name" value="Elp3/MiaA/NifB-like_rSAM"/>
</dbReference>
<dbReference type="InterPro" id="IPR031691">
    <property type="entry name" value="LIAS_N"/>
</dbReference>
<dbReference type="InterPro" id="IPR003698">
    <property type="entry name" value="Lipoyl_synth"/>
</dbReference>
<dbReference type="InterPro" id="IPR007197">
    <property type="entry name" value="rSAM"/>
</dbReference>
<dbReference type="NCBIfam" id="TIGR00510">
    <property type="entry name" value="lipA"/>
    <property type="match status" value="1"/>
</dbReference>
<dbReference type="NCBIfam" id="NF004019">
    <property type="entry name" value="PRK05481.1"/>
    <property type="match status" value="1"/>
</dbReference>
<dbReference type="NCBIfam" id="NF009544">
    <property type="entry name" value="PRK12928.1"/>
    <property type="match status" value="1"/>
</dbReference>
<dbReference type="PANTHER" id="PTHR10949">
    <property type="entry name" value="LIPOYL SYNTHASE"/>
    <property type="match status" value="1"/>
</dbReference>
<dbReference type="PANTHER" id="PTHR10949:SF0">
    <property type="entry name" value="LIPOYL SYNTHASE, MITOCHONDRIAL"/>
    <property type="match status" value="1"/>
</dbReference>
<dbReference type="Pfam" id="PF16881">
    <property type="entry name" value="LIAS_N"/>
    <property type="match status" value="1"/>
</dbReference>
<dbReference type="Pfam" id="PF04055">
    <property type="entry name" value="Radical_SAM"/>
    <property type="match status" value="1"/>
</dbReference>
<dbReference type="PIRSF" id="PIRSF005963">
    <property type="entry name" value="Lipoyl_synth"/>
    <property type="match status" value="1"/>
</dbReference>
<dbReference type="SFLD" id="SFLDF00271">
    <property type="entry name" value="lipoyl_synthase"/>
    <property type="match status" value="1"/>
</dbReference>
<dbReference type="SFLD" id="SFLDS00029">
    <property type="entry name" value="Radical_SAM"/>
    <property type="match status" value="1"/>
</dbReference>
<dbReference type="SMART" id="SM00729">
    <property type="entry name" value="Elp3"/>
    <property type="match status" value="1"/>
</dbReference>
<dbReference type="SUPFAM" id="SSF102114">
    <property type="entry name" value="Radical SAM enzymes"/>
    <property type="match status" value="1"/>
</dbReference>
<dbReference type="PROSITE" id="PS51918">
    <property type="entry name" value="RADICAL_SAM"/>
    <property type="match status" value="1"/>
</dbReference>